<proteinExistence type="evidence at transcript level"/>
<keyword id="KW-0350">Heme biosynthesis</keyword>
<keyword id="KW-0456">Lyase</keyword>
<keyword id="KW-0479">Metal-binding</keyword>
<keyword id="KW-0627">Porphyrin biosynthesis</keyword>
<keyword id="KW-1185">Reference proteome</keyword>
<keyword id="KW-0862">Zinc</keyword>
<sequence>MPVDISSLLHAGYSNPLLREWQGVRPITKSSLMYPIFISEIDDAKEAIDSMPNQFRWGVNRLEEFLGPLVKKGLRSVILFGVIESKKDYCGSMADSENGPVIKAVKEIRHLFPELVVACDVCLCEYTDHGHCGLLYEDGTINNAKSVERIAEVSGNYALAGAQIISPSDCMDGRVKAIKQKLVELELSHKVCVISYSAKFASGFFGPFRAAANGAPKFGDRSCYQLPCNARGLAKRAILRDVREGADGIMVKPGTPYLDILAMASKLADDLPIATYQVSGEFAIIHAAAAAGVFELKRHVMETMDGFMRAGANIVLTYFTPELLEWLEY</sequence>
<evidence type="ECO:0000250" key="1"/>
<evidence type="ECO:0000305" key="2"/>
<accession>P78974</accession>
<accession>Q9UTG9</accession>
<protein>
    <recommendedName>
        <fullName>Delta-aminolevulinic acid dehydratase</fullName>
        <shortName>ALADH</shortName>
        <ecNumber>4.2.1.24</ecNumber>
    </recommendedName>
    <alternativeName>
        <fullName>Porphobilinogen synthase</fullName>
    </alternativeName>
</protein>
<dbReference type="EC" id="4.2.1.24"/>
<dbReference type="EMBL" id="CU329670">
    <property type="protein sequence ID" value="CAB55847.1"/>
    <property type="molecule type" value="Genomic_DNA"/>
</dbReference>
<dbReference type="EMBL" id="U83568">
    <property type="protein sequence ID" value="AAB41236.1"/>
    <property type="molecule type" value="mRNA"/>
</dbReference>
<dbReference type="PIR" id="T37891">
    <property type="entry name" value="T37891"/>
</dbReference>
<dbReference type="RefSeq" id="NP_593917.1">
    <property type="nucleotide sequence ID" value="NM_001019346.2"/>
</dbReference>
<dbReference type="SMR" id="P78974"/>
<dbReference type="BioGRID" id="278837">
    <property type="interactions" value="8"/>
</dbReference>
<dbReference type="FunCoup" id="P78974">
    <property type="interactions" value="589"/>
</dbReference>
<dbReference type="STRING" id="284812.P78974"/>
<dbReference type="iPTMnet" id="P78974"/>
<dbReference type="SwissPalm" id="P78974"/>
<dbReference type="PaxDb" id="4896-SPAC1805.06c.1"/>
<dbReference type="EnsemblFungi" id="SPAC1805.06c.1">
    <property type="protein sequence ID" value="SPAC1805.06c.1:pep"/>
    <property type="gene ID" value="SPAC1805.06c"/>
</dbReference>
<dbReference type="GeneID" id="2542373"/>
<dbReference type="KEGG" id="spo:2542373"/>
<dbReference type="PomBase" id="SPAC1805.06c">
    <property type="gene designation" value="hem2"/>
</dbReference>
<dbReference type="VEuPathDB" id="FungiDB:SPAC1805.06c"/>
<dbReference type="eggNOG" id="KOG2794">
    <property type="taxonomic scope" value="Eukaryota"/>
</dbReference>
<dbReference type="HOGENOM" id="CLU_035731_0_1_1"/>
<dbReference type="InParanoid" id="P78974"/>
<dbReference type="OMA" id="YQMDYAN"/>
<dbReference type="PhylomeDB" id="P78974"/>
<dbReference type="Reactome" id="R-SPO-189451">
    <property type="pathway name" value="Heme biosynthesis"/>
</dbReference>
<dbReference type="Reactome" id="R-SPO-6798695">
    <property type="pathway name" value="Neutrophil degranulation"/>
</dbReference>
<dbReference type="UniPathway" id="UPA00251">
    <property type="reaction ID" value="UER00318"/>
</dbReference>
<dbReference type="PRO" id="PR:P78974"/>
<dbReference type="Proteomes" id="UP000002485">
    <property type="component" value="Chromosome I"/>
</dbReference>
<dbReference type="GO" id="GO:0005829">
    <property type="term" value="C:cytosol"/>
    <property type="evidence" value="ECO:0007005"/>
    <property type="project" value="PomBase"/>
</dbReference>
<dbReference type="GO" id="GO:0005634">
    <property type="term" value="C:nucleus"/>
    <property type="evidence" value="ECO:0007005"/>
    <property type="project" value="PomBase"/>
</dbReference>
<dbReference type="GO" id="GO:0004655">
    <property type="term" value="F:porphobilinogen synthase activity"/>
    <property type="evidence" value="ECO:0000250"/>
    <property type="project" value="UniProtKB"/>
</dbReference>
<dbReference type="GO" id="GO:0008270">
    <property type="term" value="F:zinc ion binding"/>
    <property type="evidence" value="ECO:0000250"/>
    <property type="project" value="UniProtKB"/>
</dbReference>
<dbReference type="GO" id="GO:0006783">
    <property type="term" value="P:heme biosynthetic process"/>
    <property type="evidence" value="ECO:0000250"/>
    <property type="project" value="UniProtKB"/>
</dbReference>
<dbReference type="GO" id="GO:0006782">
    <property type="term" value="P:protoporphyrinogen IX biosynthetic process"/>
    <property type="evidence" value="ECO:0007669"/>
    <property type="project" value="UniProtKB-UniPathway"/>
</dbReference>
<dbReference type="CDD" id="cd04824">
    <property type="entry name" value="eu_ALAD_PBGS_cysteine_rich"/>
    <property type="match status" value="1"/>
</dbReference>
<dbReference type="FunFam" id="3.20.20.70:FF:000048">
    <property type="entry name" value="Delta-aminolevulinic acid dehydratase"/>
    <property type="match status" value="1"/>
</dbReference>
<dbReference type="Gene3D" id="3.20.20.70">
    <property type="entry name" value="Aldolase class I"/>
    <property type="match status" value="1"/>
</dbReference>
<dbReference type="InterPro" id="IPR001731">
    <property type="entry name" value="ALAD"/>
</dbReference>
<dbReference type="InterPro" id="IPR030656">
    <property type="entry name" value="ALAD_AS"/>
</dbReference>
<dbReference type="InterPro" id="IPR013785">
    <property type="entry name" value="Aldolase_TIM"/>
</dbReference>
<dbReference type="NCBIfam" id="NF006762">
    <property type="entry name" value="PRK09283.1"/>
    <property type="match status" value="1"/>
</dbReference>
<dbReference type="PANTHER" id="PTHR11458">
    <property type="entry name" value="DELTA-AMINOLEVULINIC ACID DEHYDRATASE"/>
    <property type="match status" value="1"/>
</dbReference>
<dbReference type="PANTHER" id="PTHR11458:SF0">
    <property type="entry name" value="DELTA-AMINOLEVULINIC ACID DEHYDRATASE"/>
    <property type="match status" value="1"/>
</dbReference>
<dbReference type="Pfam" id="PF00490">
    <property type="entry name" value="ALAD"/>
    <property type="match status" value="1"/>
</dbReference>
<dbReference type="PIRSF" id="PIRSF001415">
    <property type="entry name" value="Porphbilin_synth"/>
    <property type="match status" value="1"/>
</dbReference>
<dbReference type="PRINTS" id="PR00144">
    <property type="entry name" value="DALDHYDRTASE"/>
</dbReference>
<dbReference type="SMART" id="SM01004">
    <property type="entry name" value="ALAD"/>
    <property type="match status" value="1"/>
</dbReference>
<dbReference type="SUPFAM" id="SSF51569">
    <property type="entry name" value="Aldolase"/>
    <property type="match status" value="1"/>
</dbReference>
<dbReference type="PROSITE" id="PS00169">
    <property type="entry name" value="D_ALA_DEHYDRATASE"/>
    <property type="match status" value="1"/>
</dbReference>
<reference key="1">
    <citation type="journal article" date="2002" name="Nature">
        <title>The genome sequence of Schizosaccharomyces pombe.</title>
        <authorList>
            <person name="Wood V."/>
            <person name="Gwilliam R."/>
            <person name="Rajandream M.A."/>
            <person name="Lyne M.H."/>
            <person name="Lyne R."/>
            <person name="Stewart A."/>
            <person name="Sgouros J.G."/>
            <person name="Peat N."/>
            <person name="Hayles J."/>
            <person name="Baker S.G."/>
            <person name="Basham D."/>
            <person name="Bowman S."/>
            <person name="Brooks K."/>
            <person name="Brown D."/>
            <person name="Brown S."/>
            <person name="Chillingworth T."/>
            <person name="Churcher C.M."/>
            <person name="Collins M."/>
            <person name="Connor R."/>
            <person name="Cronin A."/>
            <person name="Davis P."/>
            <person name="Feltwell T."/>
            <person name="Fraser A."/>
            <person name="Gentles S."/>
            <person name="Goble A."/>
            <person name="Hamlin N."/>
            <person name="Harris D.E."/>
            <person name="Hidalgo J."/>
            <person name="Hodgson G."/>
            <person name="Holroyd S."/>
            <person name="Hornsby T."/>
            <person name="Howarth S."/>
            <person name="Huckle E.J."/>
            <person name="Hunt S."/>
            <person name="Jagels K."/>
            <person name="James K.D."/>
            <person name="Jones L."/>
            <person name="Jones M."/>
            <person name="Leather S."/>
            <person name="McDonald S."/>
            <person name="McLean J."/>
            <person name="Mooney P."/>
            <person name="Moule S."/>
            <person name="Mungall K.L."/>
            <person name="Murphy L.D."/>
            <person name="Niblett D."/>
            <person name="Odell C."/>
            <person name="Oliver K."/>
            <person name="O'Neil S."/>
            <person name="Pearson D."/>
            <person name="Quail M.A."/>
            <person name="Rabbinowitsch E."/>
            <person name="Rutherford K.M."/>
            <person name="Rutter S."/>
            <person name="Saunders D."/>
            <person name="Seeger K."/>
            <person name="Sharp S."/>
            <person name="Skelton J."/>
            <person name="Simmonds M.N."/>
            <person name="Squares R."/>
            <person name="Squares S."/>
            <person name="Stevens K."/>
            <person name="Taylor K."/>
            <person name="Taylor R.G."/>
            <person name="Tivey A."/>
            <person name="Walsh S.V."/>
            <person name="Warren T."/>
            <person name="Whitehead S."/>
            <person name="Woodward J.R."/>
            <person name="Volckaert G."/>
            <person name="Aert R."/>
            <person name="Robben J."/>
            <person name="Grymonprez B."/>
            <person name="Weltjens I."/>
            <person name="Vanstreels E."/>
            <person name="Rieger M."/>
            <person name="Schaefer M."/>
            <person name="Mueller-Auer S."/>
            <person name="Gabel C."/>
            <person name="Fuchs M."/>
            <person name="Duesterhoeft A."/>
            <person name="Fritzc C."/>
            <person name="Holzer E."/>
            <person name="Moestl D."/>
            <person name="Hilbert H."/>
            <person name="Borzym K."/>
            <person name="Langer I."/>
            <person name="Beck A."/>
            <person name="Lehrach H."/>
            <person name="Reinhardt R."/>
            <person name="Pohl T.M."/>
            <person name="Eger P."/>
            <person name="Zimmermann W."/>
            <person name="Wedler H."/>
            <person name="Wambutt R."/>
            <person name="Purnelle B."/>
            <person name="Goffeau A."/>
            <person name="Cadieu E."/>
            <person name="Dreano S."/>
            <person name="Gloux S."/>
            <person name="Lelaure V."/>
            <person name="Mottier S."/>
            <person name="Galibert F."/>
            <person name="Aves S.J."/>
            <person name="Xiang Z."/>
            <person name="Hunt C."/>
            <person name="Moore K."/>
            <person name="Hurst S.M."/>
            <person name="Lucas M."/>
            <person name="Rochet M."/>
            <person name="Gaillardin C."/>
            <person name="Tallada V.A."/>
            <person name="Garzon A."/>
            <person name="Thode G."/>
            <person name="Daga R.R."/>
            <person name="Cruzado L."/>
            <person name="Jimenez J."/>
            <person name="Sanchez M."/>
            <person name="del Rey F."/>
            <person name="Benito J."/>
            <person name="Dominguez A."/>
            <person name="Revuelta J.L."/>
            <person name="Moreno S."/>
            <person name="Armstrong J."/>
            <person name="Forsburg S.L."/>
            <person name="Cerutti L."/>
            <person name="Lowe T."/>
            <person name="McCombie W.R."/>
            <person name="Paulsen I."/>
            <person name="Potashkin J."/>
            <person name="Shpakovski G.V."/>
            <person name="Ussery D."/>
            <person name="Barrell B.G."/>
            <person name="Nurse P."/>
        </authorList>
    </citation>
    <scope>NUCLEOTIDE SEQUENCE [LARGE SCALE GENOMIC DNA]</scope>
    <source>
        <strain>972 / ATCC 24843</strain>
    </source>
</reference>
<reference key="2">
    <citation type="submission" date="1997-01" db="EMBL/GenBank/DDBJ databases">
        <authorList>
            <person name="Choi J.K."/>
            <person name="Levin H."/>
        </authorList>
    </citation>
    <scope>NUCLEOTIDE SEQUENCE [MRNA] OF 60-329</scope>
</reference>
<organism>
    <name type="scientific">Schizosaccharomyces pombe (strain 972 / ATCC 24843)</name>
    <name type="common">Fission yeast</name>
    <dbReference type="NCBI Taxonomy" id="284812"/>
    <lineage>
        <taxon>Eukaryota</taxon>
        <taxon>Fungi</taxon>
        <taxon>Dikarya</taxon>
        <taxon>Ascomycota</taxon>
        <taxon>Taphrinomycotina</taxon>
        <taxon>Schizosaccharomycetes</taxon>
        <taxon>Schizosaccharomycetales</taxon>
        <taxon>Schizosaccharomycetaceae</taxon>
        <taxon>Schizosaccharomyces</taxon>
    </lineage>
</organism>
<name>HEM2_SCHPO</name>
<comment type="function">
    <text evidence="1">Catalyzes an early step in the biosynthesis of tetrapyrroles. Binds two molecules of 5-aminolevulinate per subunit, each at a distinct site, and catalyzes their condensation to form porphobilinogen (By similarity).</text>
</comment>
<comment type="catalytic activity">
    <reaction>
        <text>2 5-aminolevulinate = porphobilinogen + 2 H2O + H(+)</text>
        <dbReference type="Rhea" id="RHEA:24064"/>
        <dbReference type="ChEBI" id="CHEBI:15377"/>
        <dbReference type="ChEBI" id="CHEBI:15378"/>
        <dbReference type="ChEBI" id="CHEBI:58126"/>
        <dbReference type="ChEBI" id="CHEBI:356416"/>
        <dbReference type="EC" id="4.2.1.24"/>
    </reaction>
</comment>
<comment type="cofactor">
    <cofactor evidence="1">
        <name>Zn(2+)</name>
        <dbReference type="ChEBI" id="CHEBI:29105"/>
    </cofactor>
    <text evidence="1">Binds 1 zinc ion per monomer.</text>
</comment>
<comment type="pathway">
    <text>Porphyrin-containing compound metabolism; protoporphyrin-IX biosynthesis; coproporphyrinogen-III from 5-aminolevulinate: step 1/4.</text>
</comment>
<comment type="subunit">
    <text evidence="1">Homooctamer.</text>
</comment>
<comment type="similarity">
    <text evidence="2">Belongs to the ALAD family.</text>
</comment>
<gene>
    <name type="primary">hem2</name>
    <name type="ORF">SPAC1805.06c</name>
</gene>
<feature type="chain" id="PRO_0000140533" description="Delta-aminolevulinic acid dehydratase">
    <location>
        <begin position="1"/>
        <end position="329"/>
    </location>
</feature>
<feature type="active site" description="Schiff-base intermediate with substrate" evidence="1">
    <location>
        <position position="199"/>
    </location>
</feature>
<feature type="active site" description="Schiff-base intermediate with substrate" evidence="1">
    <location>
        <position position="252"/>
    </location>
</feature>
<feature type="binding site" evidence="1">
    <location>
        <position position="122"/>
    </location>
    <ligand>
        <name>Zn(2+)</name>
        <dbReference type="ChEBI" id="CHEBI:29105"/>
        <note>catalytic</note>
    </ligand>
</feature>
<feature type="binding site" evidence="1">
    <location>
        <position position="124"/>
    </location>
    <ligand>
        <name>Zn(2+)</name>
        <dbReference type="ChEBI" id="CHEBI:29105"/>
        <note>catalytic</note>
    </ligand>
</feature>
<feature type="binding site" evidence="1">
    <location>
        <position position="132"/>
    </location>
    <ligand>
        <name>Zn(2+)</name>
        <dbReference type="ChEBI" id="CHEBI:29105"/>
        <note>catalytic</note>
    </ligand>
</feature>
<feature type="binding site" evidence="1">
    <location>
        <position position="209"/>
    </location>
    <ligand>
        <name>5-aminolevulinate</name>
        <dbReference type="ChEBI" id="CHEBI:356416"/>
        <label>1</label>
    </ligand>
</feature>
<feature type="binding site" evidence="1">
    <location>
        <position position="221"/>
    </location>
    <ligand>
        <name>5-aminolevulinate</name>
        <dbReference type="ChEBI" id="CHEBI:356416"/>
        <label>1</label>
    </ligand>
</feature>
<feature type="binding site" evidence="1">
    <location>
        <position position="279"/>
    </location>
    <ligand>
        <name>5-aminolevulinate</name>
        <dbReference type="ChEBI" id="CHEBI:356416"/>
        <label>2</label>
    </ligand>
</feature>
<feature type="binding site" evidence="1">
    <location>
        <position position="318"/>
    </location>
    <ligand>
        <name>5-aminolevulinate</name>
        <dbReference type="ChEBI" id="CHEBI:356416"/>
        <label>2</label>
    </ligand>
</feature>
<feature type="sequence conflict" description="In Ref. 2; AAB41236." evidence="2" ref="2">
    <original>N</original>
    <variation>H</variation>
    <location>
        <position position="60"/>
    </location>
</feature>